<sequence length="181" mass="20434">MMKFKPNQTRTYDREGFKKRAACLCFRSEQEDEVLLVSSSRYPDQWIVPGGGMEPEEEPGGAAVREVYEEAGVKGKLGRLLGIFEQNQDRKHRTYVYVLTVTEILEDWEDSVNIGRKREWFKVEDAIKVLQCHKPVHAEYLEKLKLGCSPANGNSTVPSLPDNNALFVTAAQTSGLPSSVR</sequence>
<feature type="chain" id="PRO_0000444882" description="Diphosphoinositol polyphosphate phosphohydrolase NUDT4B">
    <location>
        <begin position="1"/>
        <end position="181"/>
    </location>
</feature>
<feature type="domain" description="Nudix hydrolase" evidence="5">
    <location>
        <begin position="18"/>
        <end position="145"/>
    </location>
</feature>
<feature type="short sequence motif" description="Nudix box" evidence="5">
    <location>
        <begin position="51"/>
        <end position="72"/>
    </location>
</feature>
<feature type="active site" description="Proton acceptor" evidence="1">
    <location>
        <position position="69"/>
    </location>
</feature>
<feature type="binding site" evidence="2">
    <location>
        <position position="10"/>
    </location>
    <ligand>
        <name>substrate</name>
    </ligand>
</feature>
<feature type="binding site" evidence="2">
    <location>
        <begin position="18"/>
        <end position="20"/>
    </location>
    <ligand>
        <name>substrate</name>
    </ligand>
</feature>
<feature type="binding site" evidence="2">
    <location>
        <begin position="39"/>
        <end position="41"/>
    </location>
    <ligand>
        <name>substrate</name>
    </ligand>
</feature>
<feature type="binding site" evidence="2">
    <location>
        <position position="50"/>
    </location>
    <ligand>
        <name>Mg(2+)</name>
        <dbReference type="ChEBI" id="CHEBI:18420"/>
        <label>1</label>
    </ligand>
</feature>
<feature type="binding site" evidence="2">
    <location>
        <position position="66"/>
    </location>
    <ligand>
        <name>Mg(2+)</name>
        <dbReference type="ChEBI" id="CHEBI:18420"/>
        <label>2</label>
    </ligand>
</feature>
<feature type="binding site" evidence="2">
    <location>
        <position position="66"/>
    </location>
    <ligand>
        <name>Mg(2+)</name>
        <dbReference type="ChEBI" id="CHEBI:18420"/>
        <label>3</label>
    </ligand>
</feature>
<feature type="binding site" evidence="2">
    <location>
        <position position="70"/>
    </location>
    <ligand>
        <name>Mg(2+)</name>
        <dbReference type="ChEBI" id="CHEBI:18420"/>
        <label>1</label>
    </ligand>
</feature>
<feature type="binding site" evidence="2">
    <location>
        <begin position="90"/>
        <end position="92"/>
    </location>
    <ligand>
        <name>substrate</name>
    </ligand>
</feature>
<feature type="binding site" evidence="2">
    <location>
        <position position="116"/>
    </location>
    <ligand>
        <name>substrate</name>
    </ligand>
</feature>
<feature type="binding site" evidence="2">
    <location>
        <position position="134"/>
    </location>
    <ligand>
        <name>substrate</name>
    </ligand>
</feature>
<protein>
    <recommendedName>
        <fullName evidence="6">Diphosphoinositol polyphosphate phosphohydrolase NUDT4B</fullName>
        <shortName evidence="6">DIPP-2B</shortName>
        <ecNumber evidence="4">3.6.1.52</ecNumber>
    </recommendedName>
    <alternativeName>
        <fullName evidence="6">Nucleoside diphosphate-linked moiety X motif 4B</fullName>
        <shortName evidence="6">Nudix motif 4B</shortName>
    </alternativeName>
    <alternativeName>
        <fullName evidence="6">Nudix hydrolase 4B</fullName>
    </alternativeName>
</protein>
<name>NUD4B_HUMAN</name>
<reference key="1">
    <citation type="journal article" date="2006" name="Nature">
        <title>The DNA sequence and biological annotation of human chromosome 1.</title>
        <authorList>
            <person name="Gregory S.G."/>
            <person name="Barlow K.F."/>
            <person name="McLay K.E."/>
            <person name="Kaul R."/>
            <person name="Swarbreck D."/>
            <person name="Dunham A."/>
            <person name="Scott C.E."/>
            <person name="Howe K.L."/>
            <person name="Woodfine K."/>
            <person name="Spencer C.C.A."/>
            <person name="Jones M.C."/>
            <person name="Gillson C."/>
            <person name="Searle S."/>
            <person name="Zhou Y."/>
            <person name="Kokocinski F."/>
            <person name="McDonald L."/>
            <person name="Evans R."/>
            <person name="Phillips K."/>
            <person name="Atkinson A."/>
            <person name="Cooper R."/>
            <person name="Jones C."/>
            <person name="Hall R.E."/>
            <person name="Andrews T.D."/>
            <person name="Lloyd C."/>
            <person name="Ainscough R."/>
            <person name="Almeida J.P."/>
            <person name="Ambrose K.D."/>
            <person name="Anderson F."/>
            <person name="Andrew R.W."/>
            <person name="Ashwell R.I.S."/>
            <person name="Aubin K."/>
            <person name="Babbage A.K."/>
            <person name="Bagguley C.L."/>
            <person name="Bailey J."/>
            <person name="Beasley H."/>
            <person name="Bethel G."/>
            <person name="Bird C.P."/>
            <person name="Bray-Allen S."/>
            <person name="Brown J.Y."/>
            <person name="Brown A.J."/>
            <person name="Buckley D."/>
            <person name="Burton J."/>
            <person name="Bye J."/>
            <person name="Carder C."/>
            <person name="Chapman J.C."/>
            <person name="Clark S.Y."/>
            <person name="Clarke G."/>
            <person name="Clee C."/>
            <person name="Cobley V."/>
            <person name="Collier R.E."/>
            <person name="Corby N."/>
            <person name="Coville G.J."/>
            <person name="Davies J."/>
            <person name="Deadman R."/>
            <person name="Dunn M."/>
            <person name="Earthrowl M."/>
            <person name="Ellington A.G."/>
            <person name="Errington H."/>
            <person name="Frankish A."/>
            <person name="Frankland J."/>
            <person name="French L."/>
            <person name="Garner P."/>
            <person name="Garnett J."/>
            <person name="Gay L."/>
            <person name="Ghori M.R.J."/>
            <person name="Gibson R."/>
            <person name="Gilby L.M."/>
            <person name="Gillett W."/>
            <person name="Glithero R.J."/>
            <person name="Grafham D.V."/>
            <person name="Griffiths C."/>
            <person name="Griffiths-Jones S."/>
            <person name="Grocock R."/>
            <person name="Hammond S."/>
            <person name="Harrison E.S.I."/>
            <person name="Hart E."/>
            <person name="Haugen E."/>
            <person name="Heath P.D."/>
            <person name="Holmes S."/>
            <person name="Holt K."/>
            <person name="Howden P.J."/>
            <person name="Hunt A.R."/>
            <person name="Hunt S.E."/>
            <person name="Hunter G."/>
            <person name="Isherwood J."/>
            <person name="James R."/>
            <person name="Johnson C."/>
            <person name="Johnson D."/>
            <person name="Joy A."/>
            <person name="Kay M."/>
            <person name="Kershaw J.K."/>
            <person name="Kibukawa M."/>
            <person name="Kimberley A.M."/>
            <person name="King A."/>
            <person name="Knights A.J."/>
            <person name="Lad H."/>
            <person name="Laird G."/>
            <person name="Lawlor S."/>
            <person name="Leongamornlert D.A."/>
            <person name="Lloyd D.M."/>
            <person name="Loveland J."/>
            <person name="Lovell J."/>
            <person name="Lush M.J."/>
            <person name="Lyne R."/>
            <person name="Martin S."/>
            <person name="Mashreghi-Mohammadi M."/>
            <person name="Matthews L."/>
            <person name="Matthews N.S.W."/>
            <person name="McLaren S."/>
            <person name="Milne S."/>
            <person name="Mistry S."/>
            <person name="Moore M.J.F."/>
            <person name="Nickerson T."/>
            <person name="O'Dell C.N."/>
            <person name="Oliver K."/>
            <person name="Palmeiri A."/>
            <person name="Palmer S.A."/>
            <person name="Parker A."/>
            <person name="Patel D."/>
            <person name="Pearce A.V."/>
            <person name="Peck A.I."/>
            <person name="Pelan S."/>
            <person name="Phelps K."/>
            <person name="Phillimore B.J."/>
            <person name="Plumb R."/>
            <person name="Rajan J."/>
            <person name="Raymond C."/>
            <person name="Rouse G."/>
            <person name="Saenphimmachak C."/>
            <person name="Sehra H.K."/>
            <person name="Sheridan E."/>
            <person name="Shownkeen R."/>
            <person name="Sims S."/>
            <person name="Skuce C.D."/>
            <person name="Smith M."/>
            <person name="Steward C."/>
            <person name="Subramanian S."/>
            <person name="Sycamore N."/>
            <person name="Tracey A."/>
            <person name="Tromans A."/>
            <person name="Van Helmond Z."/>
            <person name="Wall M."/>
            <person name="Wallis J.M."/>
            <person name="White S."/>
            <person name="Whitehead S.L."/>
            <person name="Wilkinson J.E."/>
            <person name="Willey D.L."/>
            <person name="Williams H."/>
            <person name="Wilming L."/>
            <person name="Wray P.W."/>
            <person name="Wu Z."/>
            <person name="Coulson A."/>
            <person name="Vaudin M."/>
            <person name="Sulston J.E."/>
            <person name="Durbin R.M."/>
            <person name="Hubbard T."/>
            <person name="Wooster R."/>
            <person name="Dunham I."/>
            <person name="Carter N.P."/>
            <person name="McVean G."/>
            <person name="Ross M.T."/>
            <person name="Harrow J."/>
            <person name="Olson M.V."/>
            <person name="Beck S."/>
            <person name="Rogers J."/>
            <person name="Bentley D.R."/>
        </authorList>
    </citation>
    <scope>NUCLEOTIDE SEQUENCE [LARGE SCALE GENOMIC DNA]</scope>
</reference>
<reference key="2">
    <citation type="submission" date="2005-07" db="EMBL/GenBank/DDBJ databases">
        <authorList>
            <person name="Mural R.J."/>
            <person name="Istrail S."/>
            <person name="Sutton G."/>
            <person name="Florea L."/>
            <person name="Halpern A.L."/>
            <person name="Mobarry C.M."/>
            <person name="Lippert R."/>
            <person name="Walenz B."/>
            <person name="Shatkay H."/>
            <person name="Dew I."/>
            <person name="Miller J.R."/>
            <person name="Flanigan M.J."/>
            <person name="Edwards N.J."/>
            <person name="Bolanos R."/>
            <person name="Fasulo D."/>
            <person name="Halldorsson B.V."/>
            <person name="Hannenhalli S."/>
            <person name="Turner R."/>
            <person name="Yooseph S."/>
            <person name="Lu F."/>
            <person name="Nusskern D.R."/>
            <person name="Shue B.C."/>
            <person name="Zheng X.H."/>
            <person name="Zhong F."/>
            <person name="Delcher A.L."/>
            <person name="Huson D.H."/>
            <person name="Kravitz S.A."/>
            <person name="Mouchard L."/>
            <person name="Reinert K."/>
            <person name="Remington K.A."/>
            <person name="Clark A.G."/>
            <person name="Waterman M.S."/>
            <person name="Eichler E.E."/>
            <person name="Adams M.D."/>
            <person name="Hunkapiller M.W."/>
            <person name="Myers E.W."/>
            <person name="Venter J.C."/>
        </authorList>
    </citation>
    <scope>NUCLEOTIDE SEQUENCE [LARGE SCALE GENOMIC DNA]</scope>
</reference>
<comment type="function">
    <text evidence="4">Cleaves a beta-phosphate from the diphosphate groups in PP-InsP5 (diphosphoinositol pentakisphosphate), PP-InsP4 and [PP]2-InsP4 (bisdiphosphoinositol tetrakisphosphate), suggesting that it may play a role in signal transduction. Also able to catalyze the hydrolysis of dinucleoside oligophosphate Ap6A, but not Ap5A. The major reaction products are ADP and p4a from Ap6A. Also able to hydrolyze 5-phosphoribose 1-diphosphate. Does not play a role in U8 snoRNA decapping activity. Binds U8 snoRNA.</text>
</comment>
<comment type="catalytic activity">
    <reaction evidence="4">
        <text>diphospho-myo-inositol polyphosphate + H2O = myo-inositol polyphosphate + phosphate.</text>
        <dbReference type="EC" id="3.6.1.52"/>
    </reaction>
</comment>
<comment type="cofactor">
    <cofactor evidence="3">
        <name>Mg(2+)</name>
        <dbReference type="ChEBI" id="CHEBI:18420"/>
    </cofactor>
    <cofactor evidence="3">
        <name>Mn(2+)</name>
        <dbReference type="ChEBI" id="CHEBI:29035"/>
    </cofactor>
    <text evidence="3">Binds 3 Mg(2+) or Mn(2+) ions per subunit.</text>
</comment>
<comment type="interaction">
    <interactant intactId="EBI-54454959">
        <id>A0A024RBG1</id>
    </interactant>
    <interactant intactId="EBI-726826">
        <id>Q8NFP7</id>
        <label>NUDT10</label>
    </interactant>
    <organismsDiffer>false</organismsDiffer>
    <experiments>2</experiments>
</comment>
<comment type="subcellular location">
    <subcellularLocation>
        <location evidence="4">Cytoplasm</location>
    </subcellularLocation>
</comment>
<comment type="similarity">
    <text evidence="6">Belongs to the Nudix hydrolase family. DIPP subfamily.</text>
</comment>
<keyword id="KW-0963">Cytoplasm</keyword>
<keyword id="KW-0378">Hydrolase</keyword>
<keyword id="KW-0460">Magnesium</keyword>
<keyword id="KW-0479">Metal-binding</keyword>
<keyword id="KW-1185">Reference proteome</keyword>
<keyword id="KW-0694">RNA-binding</keyword>
<organism>
    <name type="scientific">Homo sapiens</name>
    <name type="common">Human</name>
    <dbReference type="NCBI Taxonomy" id="9606"/>
    <lineage>
        <taxon>Eukaryota</taxon>
        <taxon>Metazoa</taxon>
        <taxon>Chordata</taxon>
        <taxon>Craniata</taxon>
        <taxon>Vertebrata</taxon>
        <taxon>Euteleostomi</taxon>
        <taxon>Mammalia</taxon>
        <taxon>Eutheria</taxon>
        <taxon>Euarchontoglires</taxon>
        <taxon>Primates</taxon>
        <taxon>Haplorrhini</taxon>
        <taxon>Catarrhini</taxon>
        <taxon>Hominidae</taxon>
        <taxon>Homo</taxon>
    </lineage>
</organism>
<gene>
    <name evidence="7" type="primary">NUDT4B</name>
</gene>
<dbReference type="EC" id="3.6.1.52" evidence="4"/>
<dbReference type="EMBL" id="AC245389">
    <property type="status" value="NOT_ANNOTATED_CDS"/>
    <property type="molecule type" value="Genomic_DNA"/>
</dbReference>
<dbReference type="EMBL" id="CH471054">
    <property type="protein sequence ID" value="EAW97476.1"/>
    <property type="molecule type" value="Genomic_DNA"/>
</dbReference>
<dbReference type="EMBL" id="CH471054">
    <property type="protein sequence ID" value="EAW97479.1"/>
    <property type="molecule type" value="Genomic_DNA"/>
</dbReference>
<dbReference type="CCDS" id="CCDS86013.1"/>
<dbReference type="RefSeq" id="NP_001342336.1">
    <property type="nucleotide sequence ID" value="NM_001355407.2"/>
</dbReference>
<dbReference type="SMR" id="A0A024RBG1"/>
<dbReference type="FunCoup" id="A0A024RBG1">
    <property type="interactions" value="2113"/>
</dbReference>
<dbReference type="IntAct" id="A0A024RBG1">
    <property type="interactions" value="2"/>
</dbReference>
<dbReference type="STRING" id="9606.ENSP00000338352"/>
<dbReference type="GlyGen" id="A0A024RBG1">
    <property type="glycosylation" value="1 site, 1 O-linked glycan (1 site)"/>
</dbReference>
<dbReference type="iPTMnet" id="A0A024RBG1"/>
<dbReference type="PhosphoSitePlus" id="A0A024RBG1"/>
<dbReference type="jPOST" id="A0A024RBG1"/>
<dbReference type="MassIVE" id="A0A024RBG1"/>
<dbReference type="PaxDb" id="9606-ENSP00000338352"/>
<dbReference type="PeptideAtlas" id="A0A024RBG1"/>
<dbReference type="Pumba" id="A0A024RBG1"/>
<dbReference type="DNASU" id="11163"/>
<dbReference type="Ensembl" id="ENST00000322209.5">
    <property type="protein sequence ID" value="ENSP00000492425.1"/>
    <property type="gene ID" value="ENSG00000177144.8"/>
</dbReference>
<dbReference type="GeneID" id="11163"/>
<dbReference type="GeneID" id="440672"/>
<dbReference type="MANE-Select" id="ENST00000322209.5">
    <property type="protein sequence ID" value="ENSP00000492425.1"/>
    <property type="RefSeq nucleotide sequence ID" value="NM_001355407.2"/>
    <property type="RefSeq protein sequence ID" value="NP_001342336.1"/>
</dbReference>
<dbReference type="AGR" id="HGNC:18012"/>
<dbReference type="AGR" id="HGNC:8051"/>
<dbReference type="CTD" id="11163"/>
<dbReference type="DisGeNET" id="11163"/>
<dbReference type="GeneCards" id="NUDT4B"/>
<dbReference type="HGNC" id="HGNC:18012">
    <property type="gene designation" value="NUDT4B"/>
</dbReference>
<dbReference type="HPA" id="ENSG00000177144">
    <property type="expression patterns" value="Low tissue specificity"/>
</dbReference>
<dbReference type="neXtProt" id="NX_A0A024RBG1"/>
<dbReference type="OpenTargets" id="ENSG00000173598"/>
<dbReference type="VEuPathDB" id="HostDB:ENSG00000177144"/>
<dbReference type="HOGENOM" id="CLU_037162_1_0_1"/>
<dbReference type="InParanoid" id="A0A024RBG1"/>
<dbReference type="OMA" id="HNQTRTY"/>
<dbReference type="OrthoDB" id="2011998at2759"/>
<dbReference type="PAN-GO" id="A0A024RBG1">
    <property type="GO annotations" value="11 GO annotations based on evolutionary models"/>
</dbReference>
<dbReference type="PhylomeDB" id="A0A024RBG1"/>
<dbReference type="PathwayCommons" id="A0A024RBG1"/>
<dbReference type="SignaLink" id="A0A024RBG1"/>
<dbReference type="BioGRID-ORCS" id="11163">
    <property type="hits" value="574 hits in 1156 CRISPR screens"/>
</dbReference>
<dbReference type="ChiTaRS" id="NUDT4B">
    <property type="organism name" value="human"/>
</dbReference>
<dbReference type="GenomeRNAi" id="11163"/>
<dbReference type="Pharos" id="A0A024RBG1">
    <property type="development level" value="Tbio"/>
</dbReference>
<dbReference type="PRO" id="PR:A0A024RBG1"/>
<dbReference type="Proteomes" id="UP000005640">
    <property type="component" value="Chromosome 1"/>
</dbReference>
<dbReference type="Bgee" id="ENSG00000177144">
    <property type="expression patterns" value="Expressed in gall bladder and 104 other cell types or tissues"/>
</dbReference>
<dbReference type="GO" id="GO:0005737">
    <property type="term" value="C:cytoplasm"/>
    <property type="evidence" value="ECO:0000318"/>
    <property type="project" value="GO_Central"/>
</dbReference>
<dbReference type="GO" id="GO:0005829">
    <property type="term" value="C:cytosol"/>
    <property type="evidence" value="ECO:0000314"/>
    <property type="project" value="HPA"/>
</dbReference>
<dbReference type="GO" id="GO:0005634">
    <property type="term" value="C:nucleus"/>
    <property type="evidence" value="ECO:0000318"/>
    <property type="project" value="GO_Central"/>
</dbReference>
<dbReference type="GO" id="GO:0034431">
    <property type="term" value="F:bis(5'-adenosyl)-hexaphosphatase activity"/>
    <property type="evidence" value="ECO:0000318"/>
    <property type="project" value="GO_Central"/>
</dbReference>
<dbReference type="GO" id="GO:0034432">
    <property type="term" value="F:bis(5'-adenosyl)-pentaphosphatase activity"/>
    <property type="evidence" value="ECO:0000318"/>
    <property type="project" value="GO_Central"/>
</dbReference>
<dbReference type="GO" id="GO:0008486">
    <property type="term" value="F:diphosphoinositol-polyphosphate diphosphatase activity"/>
    <property type="evidence" value="ECO:0000318"/>
    <property type="project" value="GO_Central"/>
</dbReference>
<dbReference type="GO" id="GO:0000298">
    <property type="term" value="F:endopolyphosphatase activity"/>
    <property type="evidence" value="ECO:0000318"/>
    <property type="project" value="GO_Central"/>
</dbReference>
<dbReference type="GO" id="GO:0046872">
    <property type="term" value="F:metal ion binding"/>
    <property type="evidence" value="ECO:0007669"/>
    <property type="project" value="UniProtKB-KW"/>
</dbReference>
<dbReference type="GO" id="GO:0003723">
    <property type="term" value="F:RNA binding"/>
    <property type="evidence" value="ECO:0007669"/>
    <property type="project" value="UniProtKB-KW"/>
</dbReference>
<dbReference type="GO" id="GO:1901911">
    <property type="term" value="P:adenosine 5'-(hexahydrogen pentaphosphate) catabolic process"/>
    <property type="evidence" value="ECO:0000318"/>
    <property type="project" value="GO_Central"/>
</dbReference>
<dbReference type="GO" id="GO:1901909">
    <property type="term" value="P:diadenosine hexaphosphate catabolic process"/>
    <property type="evidence" value="ECO:0000318"/>
    <property type="project" value="GO_Central"/>
</dbReference>
<dbReference type="GO" id="GO:1901907">
    <property type="term" value="P:diadenosine pentaphosphate catabolic process"/>
    <property type="evidence" value="ECO:0000318"/>
    <property type="project" value="GO_Central"/>
</dbReference>
<dbReference type="GO" id="GO:0071543">
    <property type="term" value="P:diphosphoinositol polyphosphate metabolic process"/>
    <property type="evidence" value="ECO:0000318"/>
    <property type="project" value="GO_Central"/>
</dbReference>
<dbReference type="CDD" id="cd04666">
    <property type="entry name" value="NUDIX_DIPP2_like_Nudt4"/>
    <property type="match status" value="1"/>
</dbReference>
<dbReference type="FunFam" id="3.90.79.10:FF:000002">
    <property type="entry name" value="diphosphoinositol polyphosphate phosphohydrolase 1"/>
    <property type="match status" value="1"/>
</dbReference>
<dbReference type="Gene3D" id="3.90.79.10">
    <property type="entry name" value="Nucleoside Triphosphate Pyrophosphohydrolase"/>
    <property type="match status" value="1"/>
</dbReference>
<dbReference type="InterPro" id="IPR047198">
    <property type="entry name" value="DDP-like_NUDIX"/>
</dbReference>
<dbReference type="InterPro" id="IPR015797">
    <property type="entry name" value="NUDIX_hydrolase-like_dom_sf"/>
</dbReference>
<dbReference type="InterPro" id="IPR020084">
    <property type="entry name" value="NUDIX_hydrolase_CS"/>
</dbReference>
<dbReference type="InterPro" id="IPR000086">
    <property type="entry name" value="NUDIX_hydrolase_dom"/>
</dbReference>
<dbReference type="PANTHER" id="PTHR12629">
    <property type="entry name" value="DIPHOSPHOINOSITOL POLYPHOSPHATE PHOSPHOHYDROLASE"/>
    <property type="match status" value="1"/>
</dbReference>
<dbReference type="PANTHER" id="PTHR12629:SF6">
    <property type="entry name" value="DIPHOSPHOINOSITOL POLYPHOSPHATE PHOSPHOHYDROLASE 2-RELATED"/>
    <property type="match status" value="1"/>
</dbReference>
<dbReference type="Pfam" id="PF00293">
    <property type="entry name" value="NUDIX"/>
    <property type="match status" value="1"/>
</dbReference>
<dbReference type="SUPFAM" id="SSF55811">
    <property type="entry name" value="Nudix"/>
    <property type="match status" value="1"/>
</dbReference>
<dbReference type="PROSITE" id="PS51462">
    <property type="entry name" value="NUDIX"/>
    <property type="match status" value="1"/>
</dbReference>
<dbReference type="PROSITE" id="PS00893">
    <property type="entry name" value="NUDIX_BOX"/>
    <property type="match status" value="1"/>
</dbReference>
<evidence type="ECO:0000250" key="1"/>
<evidence type="ECO:0000250" key="2">
    <source>
        <dbReference type="UniProtKB" id="O95989"/>
    </source>
</evidence>
<evidence type="ECO:0000250" key="3">
    <source>
        <dbReference type="UniProtKB" id="Q96G61"/>
    </source>
</evidence>
<evidence type="ECO:0000250" key="4">
    <source>
        <dbReference type="UniProtKB" id="Q9NZJ9"/>
    </source>
</evidence>
<evidence type="ECO:0000255" key="5">
    <source>
        <dbReference type="PROSITE-ProRule" id="PRU00794"/>
    </source>
</evidence>
<evidence type="ECO:0000305" key="6"/>
<evidence type="ECO:0000312" key="7">
    <source>
        <dbReference type="HGNC" id="HGNC:18012"/>
    </source>
</evidence>
<accession>A0A024RBG1</accession>
<proteinExistence type="evidence at protein level"/>